<keyword id="KW-0067">ATP-binding</keyword>
<keyword id="KW-1003">Cell membrane</keyword>
<keyword id="KW-0256">Endoplasmic reticulum</keyword>
<keyword id="KW-0967">Endosome</keyword>
<keyword id="KW-0333">Golgi apparatus</keyword>
<keyword id="KW-0418">Kinase</keyword>
<keyword id="KW-0443">Lipid metabolism</keyword>
<keyword id="KW-0472">Membrane</keyword>
<keyword id="KW-0547">Nucleotide-binding</keyword>
<keyword id="KW-1185">Reference proteome</keyword>
<keyword id="KW-0746">Sphingolipid metabolism</keyword>
<keyword id="KW-0808">Transferase</keyword>
<name>LCB4_SCHPO</name>
<gene>
    <name type="primary">lcb4</name>
    <name type="ORF">SPAC4A8.07c</name>
</gene>
<accession>O14159</accession>
<evidence type="ECO:0000250" key="1"/>
<evidence type="ECO:0000250" key="2">
    <source>
        <dbReference type="UniProtKB" id="Q12246"/>
    </source>
</evidence>
<evidence type="ECO:0000255" key="3">
    <source>
        <dbReference type="PROSITE-ProRule" id="PRU00783"/>
    </source>
</evidence>
<evidence type="ECO:0000305" key="4"/>
<comment type="function">
    <text evidence="2">Catalyzes the phosphorylation of the sphingoid long chain bases dihydrosphingosine (DHS) and phytosphingosine (PHS) to form dihydrosphingosine 1-phosphate (DHS-1P) and phytosphingosine 1-phosphate (PHS-1P) respectively (By similarity). Involved in the biosynthesis of sphingolipids and ceramides (By similarity). Involved in heat-induced transient cell cycle arrest (By similarity). Accumulation of phosphorylated sphingoid long chain bases (LCBPs) stimulates calcium influx and activates calcineurin signaling. Involved in heat-stress resistance (By similarity).</text>
</comment>
<comment type="catalytic activity">
    <reaction evidence="2">
        <text>a sphingoid base + ATP = a sphingoid 1-phosphate + ADP + H(+)</text>
        <dbReference type="Rhea" id="RHEA:51496"/>
        <dbReference type="ChEBI" id="CHEBI:15378"/>
        <dbReference type="ChEBI" id="CHEBI:30616"/>
        <dbReference type="ChEBI" id="CHEBI:76941"/>
        <dbReference type="ChEBI" id="CHEBI:84410"/>
        <dbReference type="ChEBI" id="CHEBI:456216"/>
        <dbReference type="EC" id="2.7.1.91"/>
    </reaction>
</comment>
<comment type="subcellular location">
    <subcellularLocation>
        <location evidence="2">Cell membrane</location>
        <topology evidence="4">Peripheral membrane protein</topology>
    </subcellularLocation>
    <subcellularLocation>
        <location evidence="2">Endoplasmic reticulum membrane</location>
        <topology evidence="4">Peripheral membrane protein</topology>
    </subcellularLocation>
    <subcellularLocation>
        <location evidence="2">Late endosome membrane</location>
        <topology evidence="4">Peripheral membrane protein</topology>
    </subcellularLocation>
    <subcellularLocation>
        <location evidence="2">Golgi apparatus membrane</location>
        <topology evidence="4">Peripheral membrane protein</topology>
    </subcellularLocation>
</comment>
<sequence>MDFGLTNNSIKAFEDQKLLHIHQSCVSYPSDTLICSIPVSAKNVDLNIPFKNILWVDKTGPNSVTLSYVSRSSKVATKCWVDFVENSDQFCEYLLDVAYKGIKRSRRFIVFINPHGGKGKAKHIWESEAEPVFSSAHSICEVVLTRRKDHAKSIAKNLDVGSYDGILSVGGDGLFHEVINGLGERDDYLEAFKLPVCMIPGGSGNAFSYNATGQLKPALTALEILKGRPTSFDLMTFEQKGKKAYSFLTANYGIIADCDIGTENWRFMGENRAYLGFFLRLFQKPDWKCSIEMDVVSSDRTEIKHMYEKSKNLAPMSESSDSDKTVSTSPESHLLTFEINDLSIFCAGLLPYIAPDAKMFPAASNDDGLIDVVIVYSKQFRKSLLSMFTQLDNGGFYYSKHLNYYKVRSFRFTPVNTGKRHYFALDGESYPLEPFECRVAPKLGTTLSPVAGFQLLDI</sequence>
<dbReference type="EC" id="2.7.1.91" evidence="2"/>
<dbReference type="EMBL" id="CU329670">
    <property type="protein sequence ID" value="CAB11477.1"/>
    <property type="molecule type" value="Genomic_DNA"/>
</dbReference>
<dbReference type="PIR" id="T38776">
    <property type="entry name" value="T38776"/>
</dbReference>
<dbReference type="RefSeq" id="NP_593818.1">
    <property type="nucleotide sequence ID" value="NM_001019248.2"/>
</dbReference>
<dbReference type="SMR" id="O14159"/>
<dbReference type="FunCoup" id="O14159">
    <property type="interactions" value="200"/>
</dbReference>
<dbReference type="STRING" id="284812.O14159"/>
<dbReference type="iPTMnet" id="O14159"/>
<dbReference type="PaxDb" id="4896-SPAC4A8.07c.1"/>
<dbReference type="EnsemblFungi" id="SPAC4A8.07c.1">
    <property type="protein sequence ID" value="SPAC4A8.07c.1:pep"/>
    <property type="gene ID" value="SPAC4A8.07c"/>
</dbReference>
<dbReference type="GeneID" id="2543328"/>
<dbReference type="KEGG" id="spo:2543328"/>
<dbReference type="PomBase" id="SPAC4A8.07c">
    <property type="gene designation" value="lcb4"/>
</dbReference>
<dbReference type="VEuPathDB" id="FungiDB:SPAC4A8.07c"/>
<dbReference type="eggNOG" id="KOG1116">
    <property type="taxonomic scope" value="Eukaryota"/>
</dbReference>
<dbReference type="HOGENOM" id="CLU_013399_0_1_1"/>
<dbReference type="InParanoid" id="O14159"/>
<dbReference type="OMA" id="TMGNFYA"/>
<dbReference type="PhylomeDB" id="O14159"/>
<dbReference type="Reactome" id="R-SPO-1483206">
    <property type="pathway name" value="Glycerophospholipid biosynthesis"/>
</dbReference>
<dbReference type="Reactome" id="R-SPO-1660661">
    <property type="pathway name" value="Sphingolipid de novo biosynthesis"/>
</dbReference>
<dbReference type="Reactome" id="R-SPO-390471">
    <property type="pathway name" value="Association of TriC/CCT with target proteins during biosynthesis"/>
</dbReference>
<dbReference type="Reactome" id="R-SPO-5218921">
    <property type="pathway name" value="VEGFR2 mediated cell proliferation"/>
</dbReference>
<dbReference type="Reactome" id="R-SPO-9009391">
    <property type="pathway name" value="Extra-nuclear estrogen signaling"/>
</dbReference>
<dbReference type="Reactome" id="R-SPO-9833482">
    <property type="pathway name" value="PKR-mediated signaling"/>
</dbReference>
<dbReference type="PRO" id="PR:O14159"/>
<dbReference type="Proteomes" id="UP000002485">
    <property type="component" value="Chromosome I"/>
</dbReference>
<dbReference type="GO" id="GO:0005737">
    <property type="term" value="C:cytoplasm"/>
    <property type="evidence" value="ECO:0000318"/>
    <property type="project" value="GO_Central"/>
</dbReference>
<dbReference type="GO" id="GO:0005783">
    <property type="term" value="C:endoplasmic reticulum"/>
    <property type="evidence" value="ECO:0000266"/>
    <property type="project" value="PomBase"/>
</dbReference>
<dbReference type="GO" id="GO:0005789">
    <property type="term" value="C:endoplasmic reticulum membrane"/>
    <property type="evidence" value="ECO:0007669"/>
    <property type="project" value="UniProtKB-SubCell"/>
</dbReference>
<dbReference type="GO" id="GO:0005794">
    <property type="term" value="C:Golgi apparatus"/>
    <property type="evidence" value="ECO:0000266"/>
    <property type="project" value="PomBase"/>
</dbReference>
<dbReference type="GO" id="GO:0000139">
    <property type="term" value="C:Golgi membrane"/>
    <property type="evidence" value="ECO:0007669"/>
    <property type="project" value="UniProtKB-SubCell"/>
</dbReference>
<dbReference type="GO" id="GO:0043231">
    <property type="term" value="C:intracellular membrane-bounded organelle"/>
    <property type="evidence" value="ECO:0000318"/>
    <property type="project" value="GO_Central"/>
</dbReference>
<dbReference type="GO" id="GO:0031902">
    <property type="term" value="C:late endosome membrane"/>
    <property type="evidence" value="ECO:0007669"/>
    <property type="project" value="UniProtKB-SubCell"/>
</dbReference>
<dbReference type="GO" id="GO:0016020">
    <property type="term" value="C:membrane"/>
    <property type="evidence" value="ECO:0000318"/>
    <property type="project" value="GO_Central"/>
</dbReference>
<dbReference type="GO" id="GO:0005886">
    <property type="term" value="C:plasma membrane"/>
    <property type="evidence" value="ECO:0007669"/>
    <property type="project" value="UniProtKB-SubCell"/>
</dbReference>
<dbReference type="GO" id="GO:0005524">
    <property type="term" value="F:ATP binding"/>
    <property type="evidence" value="ECO:0007669"/>
    <property type="project" value="UniProtKB-KW"/>
</dbReference>
<dbReference type="GO" id="GO:0004143">
    <property type="term" value="F:ATP-dependent diacylglycerol kinase activity"/>
    <property type="evidence" value="ECO:0000255"/>
    <property type="project" value="PomBase"/>
</dbReference>
<dbReference type="GO" id="GO:0017050">
    <property type="term" value="F:D-erythro-sphingosine kinase activity"/>
    <property type="evidence" value="ECO:0000318"/>
    <property type="project" value="GO_Central"/>
</dbReference>
<dbReference type="GO" id="GO:0019722">
    <property type="term" value="P:calcium-mediated signaling"/>
    <property type="evidence" value="ECO:0000266"/>
    <property type="project" value="PomBase"/>
</dbReference>
<dbReference type="GO" id="GO:0046512">
    <property type="term" value="P:sphingosine biosynthetic process"/>
    <property type="evidence" value="ECO:0000318"/>
    <property type="project" value="GO_Central"/>
</dbReference>
<dbReference type="Gene3D" id="2.60.200.40">
    <property type="match status" value="1"/>
</dbReference>
<dbReference type="Gene3D" id="3.40.50.10330">
    <property type="entry name" value="Probable inorganic polyphosphate/atp-NAD kinase, domain 1"/>
    <property type="match status" value="1"/>
</dbReference>
<dbReference type="InterPro" id="IPR017438">
    <property type="entry name" value="ATP-NAD_kinase_N"/>
</dbReference>
<dbReference type="InterPro" id="IPR001206">
    <property type="entry name" value="Diacylglycerol_kinase_cat_dom"/>
</dbReference>
<dbReference type="InterPro" id="IPR050187">
    <property type="entry name" value="Lipid_Phosphate_FormReg"/>
</dbReference>
<dbReference type="InterPro" id="IPR016064">
    <property type="entry name" value="NAD/diacylglycerol_kinase_sf"/>
</dbReference>
<dbReference type="InterPro" id="IPR045540">
    <property type="entry name" value="YegS/DAGK_C"/>
</dbReference>
<dbReference type="PANTHER" id="PTHR12358:SF31">
    <property type="entry name" value="ACYLGLYCEROL KINASE, MITOCHONDRIAL"/>
    <property type="match status" value="1"/>
</dbReference>
<dbReference type="PANTHER" id="PTHR12358">
    <property type="entry name" value="SPHINGOSINE KINASE"/>
    <property type="match status" value="1"/>
</dbReference>
<dbReference type="Pfam" id="PF00781">
    <property type="entry name" value="DAGK_cat"/>
    <property type="match status" value="1"/>
</dbReference>
<dbReference type="Pfam" id="PF19279">
    <property type="entry name" value="YegS_C"/>
    <property type="match status" value="1"/>
</dbReference>
<dbReference type="SMART" id="SM00046">
    <property type="entry name" value="DAGKc"/>
    <property type="match status" value="1"/>
</dbReference>
<dbReference type="SUPFAM" id="SSF111331">
    <property type="entry name" value="NAD kinase/diacylglycerol kinase-like"/>
    <property type="match status" value="1"/>
</dbReference>
<dbReference type="PROSITE" id="PS50146">
    <property type="entry name" value="DAGK"/>
    <property type="match status" value="1"/>
</dbReference>
<feature type="chain" id="PRO_0000314771" description="Sphingoid long chain base kinase 4">
    <location>
        <begin position="1"/>
        <end position="458"/>
    </location>
</feature>
<feature type="domain" description="DAGKc" evidence="3">
    <location>
        <begin position="103"/>
        <end position="241"/>
    </location>
</feature>
<feature type="active site" description="Proton donor/acceptor" evidence="1">
    <location>
        <position position="172"/>
    </location>
</feature>
<feature type="binding site" evidence="3">
    <location>
        <begin position="113"/>
        <end position="115"/>
    </location>
    <ligand>
        <name>ATP</name>
        <dbReference type="ChEBI" id="CHEBI:30616"/>
    </ligand>
</feature>
<feature type="binding site" evidence="3">
    <location>
        <position position="145"/>
    </location>
    <ligand>
        <name>ATP</name>
        <dbReference type="ChEBI" id="CHEBI:30616"/>
    </ligand>
</feature>
<feature type="binding site" evidence="1">
    <location>
        <begin position="170"/>
        <end position="173"/>
    </location>
    <ligand>
        <name>substrate</name>
    </ligand>
</feature>
<feature type="binding site" evidence="3">
    <location>
        <position position="177"/>
    </location>
    <ligand>
        <name>ATP</name>
        <dbReference type="ChEBI" id="CHEBI:30616"/>
    </ligand>
</feature>
<feature type="binding site" evidence="3">
    <location>
        <begin position="202"/>
        <end position="204"/>
    </location>
    <ligand>
        <name>ATP</name>
        <dbReference type="ChEBI" id="CHEBI:30616"/>
    </ligand>
</feature>
<feature type="binding site" evidence="3">
    <location>
        <position position="266"/>
    </location>
    <ligand>
        <name>ATP</name>
        <dbReference type="ChEBI" id="CHEBI:30616"/>
    </ligand>
</feature>
<feature type="binding site" evidence="3">
    <location>
        <position position="272"/>
    </location>
    <ligand>
        <name>ATP</name>
        <dbReference type="ChEBI" id="CHEBI:30616"/>
    </ligand>
</feature>
<feature type="binding site" evidence="3">
    <location>
        <begin position="426"/>
        <end position="428"/>
    </location>
    <ligand>
        <name>ATP</name>
        <dbReference type="ChEBI" id="CHEBI:30616"/>
    </ligand>
</feature>
<protein>
    <recommendedName>
        <fullName evidence="2">Sphingoid long chain base kinase 4</fullName>
        <shortName evidence="2">LCB kinase 4</shortName>
        <ecNumber evidence="2">2.7.1.91</ecNumber>
    </recommendedName>
    <alternativeName>
        <fullName evidence="4">Sphinganine kinase 4</fullName>
    </alternativeName>
</protein>
<organism>
    <name type="scientific">Schizosaccharomyces pombe (strain 972 / ATCC 24843)</name>
    <name type="common">Fission yeast</name>
    <dbReference type="NCBI Taxonomy" id="284812"/>
    <lineage>
        <taxon>Eukaryota</taxon>
        <taxon>Fungi</taxon>
        <taxon>Dikarya</taxon>
        <taxon>Ascomycota</taxon>
        <taxon>Taphrinomycotina</taxon>
        <taxon>Schizosaccharomycetes</taxon>
        <taxon>Schizosaccharomycetales</taxon>
        <taxon>Schizosaccharomycetaceae</taxon>
        <taxon>Schizosaccharomyces</taxon>
    </lineage>
</organism>
<reference key="1">
    <citation type="journal article" date="2002" name="Nature">
        <title>The genome sequence of Schizosaccharomyces pombe.</title>
        <authorList>
            <person name="Wood V."/>
            <person name="Gwilliam R."/>
            <person name="Rajandream M.A."/>
            <person name="Lyne M.H."/>
            <person name="Lyne R."/>
            <person name="Stewart A."/>
            <person name="Sgouros J.G."/>
            <person name="Peat N."/>
            <person name="Hayles J."/>
            <person name="Baker S.G."/>
            <person name="Basham D."/>
            <person name="Bowman S."/>
            <person name="Brooks K."/>
            <person name="Brown D."/>
            <person name="Brown S."/>
            <person name="Chillingworth T."/>
            <person name="Churcher C.M."/>
            <person name="Collins M."/>
            <person name="Connor R."/>
            <person name="Cronin A."/>
            <person name="Davis P."/>
            <person name="Feltwell T."/>
            <person name="Fraser A."/>
            <person name="Gentles S."/>
            <person name="Goble A."/>
            <person name="Hamlin N."/>
            <person name="Harris D.E."/>
            <person name="Hidalgo J."/>
            <person name="Hodgson G."/>
            <person name="Holroyd S."/>
            <person name="Hornsby T."/>
            <person name="Howarth S."/>
            <person name="Huckle E.J."/>
            <person name="Hunt S."/>
            <person name="Jagels K."/>
            <person name="James K.D."/>
            <person name="Jones L."/>
            <person name="Jones M."/>
            <person name="Leather S."/>
            <person name="McDonald S."/>
            <person name="McLean J."/>
            <person name="Mooney P."/>
            <person name="Moule S."/>
            <person name="Mungall K.L."/>
            <person name="Murphy L.D."/>
            <person name="Niblett D."/>
            <person name="Odell C."/>
            <person name="Oliver K."/>
            <person name="O'Neil S."/>
            <person name="Pearson D."/>
            <person name="Quail M.A."/>
            <person name="Rabbinowitsch E."/>
            <person name="Rutherford K.M."/>
            <person name="Rutter S."/>
            <person name="Saunders D."/>
            <person name="Seeger K."/>
            <person name="Sharp S."/>
            <person name="Skelton J."/>
            <person name="Simmonds M.N."/>
            <person name="Squares R."/>
            <person name="Squares S."/>
            <person name="Stevens K."/>
            <person name="Taylor K."/>
            <person name="Taylor R.G."/>
            <person name="Tivey A."/>
            <person name="Walsh S.V."/>
            <person name="Warren T."/>
            <person name="Whitehead S."/>
            <person name="Woodward J.R."/>
            <person name="Volckaert G."/>
            <person name="Aert R."/>
            <person name="Robben J."/>
            <person name="Grymonprez B."/>
            <person name="Weltjens I."/>
            <person name="Vanstreels E."/>
            <person name="Rieger M."/>
            <person name="Schaefer M."/>
            <person name="Mueller-Auer S."/>
            <person name="Gabel C."/>
            <person name="Fuchs M."/>
            <person name="Duesterhoeft A."/>
            <person name="Fritzc C."/>
            <person name="Holzer E."/>
            <person name="Moestl D."/>
            <person name="Hilbert H."/>
            <person name="Borzym K."/>
            <person name="Langer I."/>
            <person name="Beck A."/>
            <person name="Lehrach H."/>
            <person name="Reinhardt R."/>
            <person name="Pohl T.M."/>
            <person name="Eger P."/>
            <person name="Zimmermann W."/>
            <person name="Wedler H."/>
            <person name="Wambutt R."/>
            <person name="Purnelle B."/>
            <person name="Goffeau A."/>
            <person name="Cadieu E."/>
            <person name="Dreano S."/>
            <person name="Gloux S."/>
            <person name="Lelaure V."/>
            <person name="Mottier S."/>
            <person name="Galibert F."/>
            <person name="Aves S.J."/>
            <person name="Xiang Z."/>
            <person name="Hunt C."/>
            <person name="Moore K."/>
            <person name="Hurst S.M."/>
            <person name="Lucas M."/>
            <person name="Rochet M."/>
            <person name="Gaillardin C."/>
            <person name="Tallada V.A."/>
            <person name="Garzon A."/>
            <person name="Thode G."/>
            <person name="Daga R.R."/>
            <person name="Cruzado L."/>
            <person name="Jimenez J."/>
            <person name="Sanchez M."/>
            <person name="del Rey F."/>
            <person name="Benito J."/>
            <person name="Dominguez A."/>
            <person name="Revuelta J.L."/>
            <person name="Moreno S."/>
            <person name="Armstrong J."/>
            <person name="Forsburg S.L."/>
            <person name="Cerutti L."/>
            <person name="Lowe T."/>
            <person name="McCombie W.R."/>
            <person name="Paulsen I."/>
            <person name="Potashkin J."/>
            <person name="Shpakovski G.V."/>
            <person name="Ussery D."/>
            <person name="Barrell B.G."/>
            <person name="Nurse P."/>
        </authorList>
    </citation>
    <scope>NUCLEOTIDE SEQUENCE [LARGE SCALE GENOMIC DNA]</scope>
    <source>
        <strain>972 / ATCC 24843</strain>
    </source>
</reference>
<proteinExistence type="inferred from homology"/>